<organism>
    <name type="scientific">Bigelowiella natans</name>
    <name type="common">Pedinomonas minutissima</name>
    <name type="synonym">Chlorarachnion sp. (strain CCMP621)</name>
    <dbReference type="NCBI Taxonomy" id="227086"/>
    <lineage>
        <taxon>Eukaryota</taxon>
        <taxon>Sar</taxon>
        <taxon>Rhizaria</taxon>
        <taxon>Cercozoa</taxon>
        <taxon>Chlorarachniophyceae</taxon>
        <taxon>Bigelowiella</taxon>
    </lineage>
</organism>
<dbReference type="EMBL" id="DQ851108">
    <property type="protein sequence ID" value="ABG91390.1"/>
    <property type="molecule type" value="Genomic_DNA"/>
</dbReference>
<dbReference type="RefSeq" id="YP_778558.1">
    <property type="nucleotide sequence ID" value="NC_008408.1"/>
</dbReference>
<dbReference type="SMR" id="Q06J69"/>
<dbReference type="GeneID" id="4352975"/>
<dbReference type="GO" id="GO:0009535">
    <property type="term" value="C:chloroplast thylakoid membrane"/>
    <property type="evidence" value="ECO:0007669"/>
    <property type="project" value="UniProtKB-SubCell"/>
</dbReference>
<dbReference type="GO" id="GO:0045259">
    <property type="term" value="C:proton-transporting ATP synthase complex"/>
    <property type="evidence" value="ECO:0007669"/>
    <property type="project" value="UniProtKB-KW"/>
</dbReference>
<dbReference type="GO" id="GO:0005524">
    <property type="term" value="F:ATP binding"/>
    <property type="evidence" value="ECO:0007669"/>
    <property type="project" value="UniProtKB-KW"/>
</dbReference>
<dbReference type="GO" id="GO:0046933">
    <property type="term" value="F:proton-transporting ATP synthase activity, rotational mechanism"/>
    <property type="evidence" value="ECO:0007669"/>
    <property type="project" value="UniProtKB-UniRule"/>
</dbReference>
<dbReference type="CDD" id="cd06503">
    <property type="entry name" value="ATP-synt_Fo_b"/>
    <property type="match status" value="1"/>
</dbReference>
<dbReference type="HAMAP" id="MF_01398">
    <property type="entry name" value="ATP_synth_b_bprime"/>
    <property type="match status" value="1"/>
</dbReference>
<dbReference type="InterPro" id="IPR002146">
    <property type="entry name" value="ATP_synth_b/b'su_bac/chlpt"/>
</dbReference>
<dbReference type="PANTHER" id="PTHR34264">
    <property type="entry name" value="ATP SYNTHASE SUBUNIT B, CHLOROPLASTIC"/>
    <property type="match status" value="1"/>
</dbReference>
<dbReference type="PANTHER" id="PTHR34264:SF3">
    <property type="entry name" value="ATP SYNTHASE SUBUNIT B, CHLOROPLASTIC"/>
    <property type="match status" value="1"/>
</dbReference>
<dbReference type="Pfam" id="PF00430">
    <property type="entry name" value="ATP-synt_B"/>
    <property type="match status" value="1"/>
</dbReference>
<accession>Q06J69</accession>
<protein>
    <recommendedName>
        <fullName evidence="1">ATP synthase subunit b, chloroplastic</fullName>
    </recommendedName>
    <alternativeName>
        <fullName evidence="1">ATP synthase F(0) sector subunit b</fullName>
    </alternativeName>
    <alternativeName>
        <fullName evidence="1">ATPase subunit I</fullName>
    </alternativeName>
</protein>
<reference key="1">
    <citation type="journal article" date="2007" name="Mol. Biol. Evol.">
        <title>The complete chloroplast genome of the chlorarachniophyte Bigelowiella natans: evidence for independent origins of chlorarachniophyte and euglenid secondary endosymbionts.</title>
        <authorList>
            <person name="Rogers M.B."/>
            <person name="Gilson P.R."/>
            <person name="Su V."/>
            <person name="McFadden G.I."/>
            <person name="Keeling P.J."/>
        </authorList>
    </citation>
    <scope>NUCLEOTIDE SEQUENCE [LARGE SCALE GENOMIC DNA]</scope>
</reference>
<gene>
    <name evidence="1" type="primary">atpF</name>
</gene>
<proteinExistence type="inferred from homology"/>
<comment type="function">
    <text evidence="1">F(1)F(0) ATP synthase produces ATP from ADP in the presence of a proton or sodium gradient. F-type ATPases consist of two structural domains, F(1) containing the extramembraneous catalytic core and F(0) containing the membrane proton channel, linked together by a central stalk and a peripheral stalk. During catalysis, ATP synthesis in the catalytic domain of F(1) is coupled via a rotary mechanism of the central stalk subunits to proton translocation.</text>
</comment>
<comment type="function">
    <text evidence="1">Component of the F(0) channel, it forms part of the peripheral stalk, linking F(1) to F(0).</text>
</comment>
<comment type="subunit">
    <text evidence="1">F-type ATPases have 2 components, F(1) - the catalytic core - and F(0) - the membrane proton channel. F(1) has five subunits: alpha(3), beta(3), gamma(1), delta(1), epsilon(1). F(0) has four main subunits: a(1), b(1), b'(1) and c(10-14). The alpha and beta chains form an alternating ring which encloses part of the gamma chain. F(1) is attached to F(0) by a central stalk formed by the gamma and epsilon chains, while a peripheral stalk is formed by the delta, b and b' chains.</text>
</comment>
<comment type="subcellular location">
    <subcellularLocation>
        <location evidence="1">Plastid</location>
        <location evidence="1">Chloroplast thylakoid membrane</location>
        <topology evidence="1">Single-pass membrane protein</topology>
    </subcellularLocation>
</comment>
<comment type="miscellaneous">
    <text>In plastids the F-type ATPase is also known as CF(1)CF(0).</text>
</comment>
<comment type="similarity">
    <text evidence="1">Belongs to the ATPase B chain family.</text>
</comment>
<name>ATPF_BIGNA</name>
<sequence>MNDLFLFNNSFQDSFEINTDLFDTNIINLSIVLFVVIRFLGEALSDTLENRKQTIIDSLQNSNKKVYIVKNKLVEVKSKLELTQTEVENVYSSRFSYFKTRKQTLLEQVQSYLTQLQSLQKDSIEGQTKKVLSDVYDTTISKTFDTLYINLASAFKKSGNFSNKKKAITYSYLKRLN</sequence>
<evidence type="ECO:0000255" key="1">
    <source>
        <dbReference type="HAMAP-Rule" id="MF_01398"/>
    </source>
</evidence>
<feature type="chain" id="PRO_0000310410" description="ATP synthase subunit b, chloroplastic">
    <location>
        <begin position="1"/>
        <end position="177"/>
    </location>
</feature>
<feature type="transmembrane region" description="Helical" evidence="1">
    <location>
        <begin position="26"/>
        <end position="44"/>
    </location>
</feature>
<geneLocation type="chloroplast"/>
<keyword id="KW-0066">ATP synthesis</keyword>
<keyword id="KW-0067">ATP-binding</keyword>
<keyword id="KW-0138">CF(0)</keyword>
<keyword id="KW-0150">Chloroplast</keyword>
<keyword id="KW-0375">Hydrogen ion transport</keyword>
<keyword id="KW-0406">Ion transport</keyword>
<keyword id="KW-0472">Membrane</keyword>
<keyword id="KW-0547">Nucleotide-binding</keyword>
<keyword id="KW-0934">Plastid</keyword>
<keyword id="KW-0793">Thylakoid</keyword>
<keyword id="KW-0812">Transmembrane</keyword>
<keyword id="KW-1133">Transmembrane helix</keyword>
<keyword id="KW-0813">Transport</keyword>